<sequence length="437" mass="49865">MAAATLRTPTQGTVTFEDVAVHFSWEEWGLLDEAQRCLYRDVMLENLALLTSLDVHHQKQHLGEKHFRSNVGRALFVKTCTFHVSGEPSTCREVGKDFLAKLGFLHQQAAHTGEQSNSKSDGGAISHRGKTHYNCGEHTKAFSGKHTLVQQQRTLTTERCYICSECGKSFSKSYSLNDHWRLHTGEKPYECRECGKSFRQSSSLIQHRRVHTAVRPHECDECGKLFSNKSNLIKHRRVHTGERPYECSECGKSFSQRSALLQHRGVHTGERPYECSECGKFFTYHSSLIKHQKVHSGSRPYECSECGKSFSQNSSLIEHHRVHTGERPYKCSECGKSFSQRSALLQHRGVHTGERPYECSECGKFFPYSSSLRKHQRVHTGSRPYECSECGKSFTQNSGLIKHRRVHTGEKPYECTECGKSFSHNSSLIKHQRIHSR</sequence>
<feature type="chain" id="PRO_0000047430" description="Zinc finger protein 154">
    <location>
        <begin position="1"/>
        <end position="437"/>
    </location>
</feature>
<feature type="domain" description="KRAB" evidence="2">
    <location>
        <begin position="14"/>
        <end position="88"/>
    </location>
</feature>
<feature type="zinc finger region" description="C2H2-type 1; degenerate" evidence="1">
    <location>
        <begin position="89"/>
        <end position="111"/>
    </location>
</feature>
<feature type="zinc finger region" description="C2H2-type 2; degenerate" evidence="1">
    <location>
        <begin position="133"/>
        <end position="155"/>
    </location>
</feature>
<feature type="zinc finger region" description="C2H2-type 3" evidence="1">
    <location>
        <begin position="161"/>
        <end position="183"/>
    </location>
</feature>
<feature type="zinc finger region" description="C2H2-type 4" evidence="1">
    <location>
        <begin position="189"/>
        <end position="211"/>
    </location>
</feature>
<feature type="zinc finger region" description="C2H2-type 5" evidence="1">
    <location>
        <begin position="217"/>
        <end position="239"/>
    </location>
</feature>
<feature type="zinc finger region" description="C2H2-type 6" evidence="1">
    <location>
        <begin position="245"/>
        <end position="267"/>
    </location>
</feature>
<feature type="zinc finger region" description="C2H2-type 7" evidence="1">
    <location>
        <begin position="273"/>
        <end position="295"/>
    </location>
</feature>
<feature type="zinc finger region" description="C2H2-type 8" evidence="1">
    <location>
        <begin position="301"/>
        <end position="323"/>
    </location>
</feature>
<feature type="zinc finger region" description="C2H2-type 9" evidence="1">
    <location>
        <begin position="329"/>
        <end position="351"/>
    </location>
</feature>
<feature type="zinc finger region" description="C2H2-type 10" evidence="1">
    <location>
        <begin position="357"/>
        <end position="379"/>
    </location>
</feature>
<feature type="zinc finger region" description="C2H2-type 11" evidence="1">
    <location>
        <begin position="385"/>
        <end position="407"/>
    </location>
</feature>
<feature type="zinc finger region" description="C2H2-type 12" evidence="1">
    <location>
        <begin position="413"/>
        <end position="435"/>
    </location>
</feature>
<feature type="region of interest" description="Disordered" evidence="3">
    <location>
        <begin position="110"/>
        <end position="129"/>
    </location>
</feature>
<feature type="compositionally biased region" description="Polar residues" evidence="3">
    <location>
        <begin position="110"/>
        <end position="120"/>
    </location>
</feature>
<feature type="sequence variant" id="VAR_060678" description="In dbSNP:rs34282745." evidence="4 5">
    <original>H</original>
    <variation>R</variation>
    <location>
        <position position="57"/>
    </location>
</feature>
<feature type="sequence variant" id="VAR_052779" description="In dbSNP:rs2074078.">
    <original>G</original>
    <variation>V</variation>
    <location>
        <position position="122"/>
    </location>
</feature>
<feature type="sequence variant" id="VAR_052780" description="In dbSNP:rs2188736.">
    <original>L</original>
    <variation>V</variation>
    <location>
        <position position="182"/>
    </location>
</feature>
<feature type="sequence variant" id="VAR_052781" description="In dbSNP:rs34746514.">
    <original>P</original>
    <variation>L</variation>
    <location>
        <position position="384"/>
    </location>
</feature>
<feature type="sequence conflict" description="In Ref. 1; BAC03839." evidence="6" ref="1">
    <original>A</original>
    <variation>V</variation>
    <location>
        <position position="3"/>
    </location>
</feature>
<feature type="sequence conflict" description="In Ref. 1; BAC03839." evidence="6" ref="1">
    <original>S</original>
    <variation>I</variation>
    <location>
        <position position="296"/>
    </location>
</feature>
<proteinExistence type="evidence at protein level"/>
<organism>
    <name type="scientific">Homo sapiens</name>
    <name type="common">Human</name>
    <dbReference type="NCBI Taxonomy" id="9606"/>
    <lineage>
        <taxon>Eukaryota</taxon>
        <taxon>Metazoa</taxon>
        <taxon>Chordata</taxon>
        <taxon>Craniata</taxon>
        <taxon>Vertebrata</taxon>
        <taxon>Euteleostomi</taxon>
        <taxon>Mammalia</taxon>
        <taxon>Eutheria</taxon>
        <taxon>Euarchontoglires</taxon>
        <taxon>Primates</taxon>
        <taxon>Haplorrhini</taxon>
        <taxon>Catarrhini</taxon>
        <taxon>Hominidae</taxon>
        <taxon>Homo</taxon>
    </lineage>
</organism>
<reference key="1">
    <citation type="journal article" date="2004" name="Nat. Genet.">
        <title>Complete sequencing and characterization of 21,243 full-length human cDNAs.</title>
        <authorList>
            <person name="Ota T."/>
            <person name="Suzuki Y."/>
            <person name="Nishikawa T."/>
            <person name="Otsuki T."/>
            <person name="Sugiyama T."/>
            <person name="Irie R."/>
            <person name="Wakamatsu A."/>
            <person name="Hayashi K."/>
            <person name="Sato H."/>
            <person name="Nagai K."/>
            <person name="Kimura K."/>
            <person name="Makita H."/>
            <person name="Sekine M."/>
            <person name="Obayashi M."/>
            <person name="Nishi T."/>
            <person name="Shibahara T."/>
            <person name="Tanaka T."/>
            <person name="Ishii S."/>
            <person name="Yamamoto J."/>
            <person name="Saito K."/>
            <person name="Kawai Y."/>
            <person name="Isono Y."/>
            <person name="Nakamura Y."/>
            <person name="Nagahari K."/>
            <person name="Murakami K."/>
            <person name="Yasuda T."/>
            <person name="Iwayanagi T."/>
            <person name="Wagatsuma M."/>
            <person name="Shiratori A."/>
            <person name="Sudo H."/>
            <person name="Hosoiri T."/>
            <person name="Kaku Y."/>
            <person name="Kodaira H."/>
            <person name="Kondo H."/>
            <person name="Sugawara M."/>
            <person name="Takahashi M."/>
            <person name="Kanda K."/>
            <person name="Yokoi T."/>
            <person name="Furuya T."/>
            <person name="Kikkawa E."/>
            <person name="Omura Y."/>
            <person name="Abe K."/>
            <person name="Kamihara K."/>
            <person name="Katsuta N."/>
            <person name="Sato K."/>
            <person name="Tanikawa M."/>
            <person name="Yamazaki M."/>
            <person name="Ninomiya K."/>
            <person name="Ishibashi T."/>
            <person name="Yamashita H."/>
            <person name="Murakawa K."/>
            <person name="Fujimori K."/>
            <person name="Tanai H."/>
            <person name="Kimata M."/>
            <person name="Watanabe M."/>
            <person name="Hiraoka S."/>
            <person name="Chiba Y."/>
            <person name="Ishida S."/>
            <person name="Ono Y."/>
            <person name="Takiguchi S."/>
            <person name="Watanabe S."/>
            <person name="Yosida M."/>
            <person name="Hotuta T."/>
            <person name="Kusano J."/>
            <person name="Kanehori K."/>
            <person name="Takahashi-Fujii A."/>
            <person name="Hara H."/>
            <person name="Tanase T.-O."/>
            <person name="Nomura Y."/>
            <person name="Togiya S."/>
            <person name="Komai F."/>
            <person name="Hara R."/>
            <person name="Takeuchi K."/>
            <person name="Arita M."/>
            <person name="Imose N."/>
            <person name="Musashino K."/>
            <person name="Yuuki H."/>
            <person name="Oshima A."/>
            <person name="Sasaki N."/>
            <person name="Aotsuka S."/>
            <person name="Yoshikawa Y."/>
            <person name="Matsunawa H."/>
            <person name="Ichihara T."/>
            <person name="Shiohata N."/>
            <person name="Sano S."/>
            <person name="Moriya S."/>
            <person name="Momiyama H."/>
            <person name="Satoh N."/>
            <person name="Takami S."/>
            <person name="Terashima Y."/>
            <person name="Suzuki O."/>
            <person name="Nakagawa S."/>
            <person name="Senoh A."/>
            <person name="Mizoguchi H."/>
            <person name="Goto Y."/>
            <person name="Shimizu F."/>
            <person name="Wakebe H."/>
            <person name="Hishigaki H."/>
            <person name="Watanabe T."/>
            <person name="Sugiyama A."/>
            <person name="Takemoto M."/>
            <person name="Kawakami B."/>
            <person name="Yamazaki M."/>
            <person name="Watanabe K."/>
            <person name="Kumagai A."/>
            <person name="Itakura S."/>
            <person name="Fukuzumi Y."/>
            <person name="Fujimori Y."/>
            <person name="Komiyama M."/>
            <person name="Tashiro H."/>
            <person name="Tanigami A."/>
            <person name="Fujiwara T."/>
            <person name="Ono T."/>
            <person name="Yamada K."/>
            <person name="Fujii Y."/>
            <person name="Ozaki K."/>
            <person name="Hirao M."/>
            <person name="Ohmori Y."/>
            <person name="Kawabata A."/>
            <person name="Hikiji T."/>
            <person name="Kobatake N."/>
            <person name="Inagaki H."/>
            <person name="Ikema Y."/>
            <person name="Okamoto S."/>
            <person name="Okitani R."/>
            <person name="Kawakami T."/>
            <person name="Noguchi S."/>
            <person name="Itoh T."/>
            <person name="Shigeta K."/>
            <person name="Senba T."/>
            <person name="Matsumura K."/>
            <person name="Nakajima Y."/>
            <person name="Mizuno T."/>
            <person name="Morinaga M."/>
            <person name="Sasaki M."/>
            <person name="Togashi T."/>
            <person name="Oyama M."/>
            <person name="Hata H."/>
            <person name="Watanabe M."/>
            <person name="Komatsu T."/>
            <person name="Mizushima-Sugano J."/>
            <person name="Satoh T."/>
            <person name="Shirai Y."/>
            <person name="Takahashi Y."/>
            <person name="Nakagawa K."/>
            <person name="Okumura K."/>
            <person name="Nagase T."/>
            <person name="Nomura N."/>
            <person name="Kikuchi H."/>
            <person name="Masuho Y."/>
            <person name="Yamashita R."/>
            <person name="Nakai K."/>
            <person name="Yada T."/>
            <person name="Nakamura Y."/>
            <person name="Ohara O."/>
            <person name="Isogai T."/>
            <person name="Sugano S."/>
        </authorList>
    </citation>
    <scope>NUCLEOTIDE SEQUENCE [LARGE SCALE MRNA]</scope>
</reference>
<reference key="2">
    <citation type="submission" date="2002-11" db="EMBL/GenBank/DDBJ databases">
        <title>The nucleotide sequence of a long cDNA clone isolated from human.</title>
        <authorList>
            <person name="Nagase T."/>
            <person name="Kikuno R."/>
            <person name="Ohara O."/>
        </authorList>
    </citation>
    <scope>NUCLEOTIDE SEQUENCE [LARGE SCALE MRNA]</scope>
    <scope>VARIANT ARG-57</scope>
    <source>
        <tissue>Brain</tissue>
    </source>
</reference>
<reference key="3">
    <citation type="journal article" date="2004" name="Genome Res.">
        <title>The status, quality, and expansion of the NIH full-length cDNA project: the Mammalian Gene Collection (MGC).</title>
        <authorList>
            <consortium name="The MGC Project Team"/>
        </authorList>
    </citation>
    <scope>NUCLEOTIDE SEQUENCE [LARGE SCALE MRNA]</scope>
    <scope>VARIANT ARG-57</scope>
</reference>
<reference key="4">
    <citation type="journal article" date="1995" name="Genomics">
        <title>Isolation and fine mapping of 16 novel human zinc finger-encoding cDNAs identify putative candidate genes for developmental and malignant disorders.</title>
        <authorList>
            <person name="Tommerup N."/>
            <person name="Vissing H."/>
        </authorList>
    </citation>
    <scope>NUCLEOTIDE SEQUENCE [MRNA] OF 351-437</scope>
    <source>
        <tissue>Insulinoma</tissue>
    </source>
</reference>
<name>ZN154_HUMAN</name>
<dbReference type="EMBL" id="AK092261">
    <property type="protein sequence ID" value="BAC03839.1"/>
    <property type="molecule type" value="mRNA"/>
</dbReference>
<dbReference type="EMBL" id="AB095924">
    <property type="protein sequence ID" value="BAC23100.1"/>
    <property type="status" value="ALT_INIT"/>
    <property type="molecule type" value="mRNA"/>
</dbReference>
<dbReference type="EMBL" id="BC152404">
    <property type="protein sequence ID" value="AAI52405.1"/>
    <property type="molecule type" value="mRNA"/>
</dbReference>
<dbReference type="EMBL" id="BC152426">
    <property type="protein sequence ID" value="AAI52427.1"/>
    <property type="molecule type" value="mRNA"/>
</dbReference>
<dbReference type="EMBL" id="BC152561">
    <property type="protein sequence ID" value="AAI52562.1"/>
    <property type="molecule type" value="mRNA"/>
</dbReference>
<dbReference type="EMBL" id="U20648">
    <property type="protein sequence ID" value="AAC50257.1"/>
    <property type="molecule type" value="mRNA"/>
</dbReference>
<dbReference type="CCDS" id="CCDS42639.1"/>
<dbReference type="PIR" id="I38941">
    <property type="entry name" value="I38941"/>
</dbReference>
<dbReference type="RefSeq" id="NP_001078853.1">
    <property type="nucleotide sequence ID" value="NM_001085384.3"/>
</dbReference>
<dbReference type="SMR" id="Q13106"/>
<dbReference type="BioGRID" id="113504">
    <property type="interactions" value="35"/>
</dbReference>
<dbReference type="FunCoup" id="Q13106">
    <property type="interactions" value="6"/>
</dbReference>
<dbReference type="IntAct" id="Q13106">
    <property type="interactions" value="27"/>
</dbReference>
<dbReference type="STRING" id="9606.ENSP00000421258"/>
<dbReference type="iPTMnet" id="Q13106"/>
<dbReference type="PhosphoSitePlus" id="Q13106"/>
<dbReference type="BioMuta" id="ZNF154"/>
<dbReference type="DMDM" id="143811477"/>
<dbReference type="jPOST" id="Q13106"/>
<dbReference type="MassIVE" id="Q13106"/>
<dbReference type="PaxDb" id="9606-ENSP00000421258"/>
<dbReference type="PeptideAtlas" id="Q13106"/>
<dbReference type="ProteomicsDB" id="59157"/>
<dbReference type="Antibodypedia" id="33286">
    <property type="antibodies" value="89 antibodies from 18 providers"/>
</dbReference>
<dbReference type="DNASU" id="7710"/>
<dbReference type="Ensembl" id="ENST00000451275.1">
    <property type="protein sequence ID" value="ENSP00000469633.1"/>
    <property type="gene ID" value="ENSG00000179909.16"/>
</dbReference>
<dbReference type="Ensembl" id="ENST00000512439.6">
    <property type="protein sequence ID" value="ENSP00000421258.2"/>
    <property type="gene ID" value="ENSG00000179909.16"/>
</dbReference>
<dbReference type="Ensembl" id="ENST00000684351.1">
    <property type="protein sequence ID" value="ENSP00000507206.1"/>
    <property type="gene ID" value="ENSG00000179909.16"/>
</dbReference>
<dbReference type="GeneID" id="7710"/>
<dbReference type="KEGG" id="hsa:7710"/>
<dbReference type="MANE-Select" id="ENST00000684351.1">
    <property type="protein sequence ID" value="ENSP00000507206.1"/>
    <property type="RefSeq nucleotide sequence ID" value="NM_001085384.3"/>
    <property type="RefSeq protein sequence ID" value="NP_001078853.1"/>
</dbReference>
<dbReference type="UCSC" id="uc061dmm.1">
    <property type="organism name" value="human"/>
</dbReference>
<dbReference type="AGR" id="HGNC:12939"/>
<dbReference type="CTD" id="7710"/>
<dbReference type="DisGeNET" id="7710"/>
<dbReference type="GeneCards" id="ZNF154"/>
<dbReference type="HGNC" id="HGNC:12939">
    <property type="gene designation" value="ZNF154"/>
</dbReference>
<dbReference type="HPA" id="ENSG00000179909">
    <property type="expression patterns" value="Low tissue specificity"/>
</dbReference>
<dbReference type="MIM" id="604085">
    <property type="type" value="gene"/>
</dbReference>
<dbReference type="neXtProt" id="NX_Q13106"/>
<dbReference type="OpenTargets" id="ENSG00000179909"/>
<dbReference type="PharmGKB" id="PA37523"/>
<dbReference type="VEuPathDB" id="HostDB:ENSG00000179909"/>
<dbReference type="eggNOG" id="KOG1721">
    <property type="taxonomic scope" value="Eukaryota"/>
</dbReference>
<dbReference type="GeneTree" id="ENSGT00940000154734"/>
<dbReference type="HOGENOM" id="CLU_002678_0_2_1"/>
<dbReference type="InParanoid" id="Q13106"/>
<dbReference type="OMA" id="KCYMCSE"/>
<dbReference type="OrthoDB" id="8922241at2759"/>
<dbReference type="PAN-GO" id="Q13106">
    <property type="GO annotations" value="4 GO annotations based on evolutionary models"/>
</dbReference>
<dbReference type="PhylomeDB" id="Q13106"/>
<dbReference type="TreeFam" id="TF339848"/>
<dbReference type="PathwayCommons" id="Q13106"/>
<dbReference type="Reactome" id="R-HSA-212436">
    <property type="pathway name" value="Generic Transcription Pathway"/>
</dbReference>
<dbReference type="SignaLink" id="Q13106"/>
<dbReference type="BioGRID-ORCS" id="7710">
    <property type="hits" value="22 hits in 1166 CRISPR screens"/>
</dbReference>
<dbReference type="ChiTaRS" id="ZNF154">
    <property type="organism name" value="human"/>
</dbReference>
<dbReference type="GenomeRNAi" id="7710"/>
<dbReference type="Pharos" id="Q13106">
    <property type="development level" value="Tbio"/>
</dbReference>
<dbReference type="PRO" id="PR:Q13106"/>
<dbReference type="Proteomes" id="UP000005640">
    <property type="component" value="Chromosome 19"/>
</dbReference>
<dbReference type="RNAct" id="Q13106">
    <property type="molecule type" value="protein"/>
</dbReference>
<dbReference type="Bgee" id="ENSG00000179909">
    <property type="expression patterns" value="Expressed in cortical plate and 96 other cell types or tissues"/>
</dbReference>
<dbReference type="ExpressionAtlas" id="Q13106">
    <property type="expression patterns" value="baseline and differential"/>
</dbReference>
<dbReference type="GO" id="GO:0005634">
    <property type="term" value="C:nucleus"/>
    <property type="evidence" value="ECO:0000318"/>
    <property type="project" value="GO_Central"/>
</dbReference>
<dbReference type="GO" id="GO:0000981">
    <property type="term" value="F:DNA-binding transcription factor activity, RNA polymerase II-specific"/>
    <property type="evidence" value="ECO:0000318"/>
    <property type="project" value="GO_Central"/>
</dbReference>
<dbReference type="GO" id="GO:0000978">
    <property type="term" value="F:RNA polymerase II cis-regulatory region sequence-specific DNA binding"/>
    <property type="evidence" value="ECO:0000318"/>
    <property type="project" value="GO_Central"/>
</dbReference>
<dbReference type="GO" id="GO:0008270">
    <property type="term" value="F:zinc ion binding"/>
    <property type="evidence" value="ECO:0007669"/>
    <property type="project" value="UniProtKB-KW"/>
</dbReference>
<dbReference type="GO" id="GO:0006357">
    <property type="term" value="P:regulation of transcription by RNA polymerase II"/>
    <property type="evidence" value="ECO:0000318"/>
    <property type="project" value="GO_Central"/>
</dbReference>
<dbReference type="CDD" id="cd07765">
    <property type="entry name" value="KRAB_A-box"/>
    <property type="match status" value="1"/>
</dbReference>
<dbReference type="FunFam" id="3.30.160.60:FF:000249">
    <property type="entry name" value="Zinc finger protein 154"/>
    <property type="match status" value="4"/>
</dbReference>
<dbReference type="FunFam" id="3.30.160.60:FF:001556">
    <property type="entry name" value="Zinc finger protein 154"/>
    <property type="match status" value="1"/>
</dbReference>
<dbReference type="FunFam" id="3.30.160.60:FF:002352">
    <property type="entry name" value="Zinc finger protein 154"/>
    <property type="match status" value="1"/>
</dbReference>
<dbReference type="FunFam" id="3.30.160.60:FF:000987">
    <property type="entry name" value="Zinc finger protein 275"/>
    <property type="match status" value="1"/>
</dbReference>
<dbReference type="FunFam" id="3.30.160.60:FF:000135">
    <property type="entry name" value="Zinc finger protein 358"/>
    <property type="match status" value="1"/>
</dbReference>
<dbReference type="FunFam" id="3.30.160.60:FF:001035">
    <property type="entry name" value="zinc finger protein 697"/>
    <property type="match status" value="1"/>
</dbReference>
<dbReference type="FunFam" id="3.30.160.60:FF:001489">
    <property type="entry name" value="Zinc finger protein interacting with ribonucleoprotein K"/>
    <property type="match status" value="1"/>
</dbReference>
<dbReference type="Gene3D" id="6.10.140.140">
    <property type="match status" value="1"/>
</dbReference>
<dbReference type="Gene3D" id="3.30.160.60">
    <property type="entry name" value="Classic Zinc Finger"/>
    <property type="match status" value="10"/>
</dbReference>
<dbReference type="InterPro" id="IPR001909">
    <property type="entry name" value="KRAB"/>
</dbReference>
<dbReference type="InterPro" id="IPR036051">
    <property type="entry name" value="KRAB_dom_sf"/>
</dbReference>
<dbReference type="InterPro" id="IPR036236">
    <property type="entry name" value="Znf_C2H2_sf"/>
</dbReference>
<dbReference type="InterPro" id="IPR013087">
    <property type="entry name" value="Znf_C2H2_type"/>
</dbReference>
<dbReference type="PANTHER" id="PTHR23226">
    <property type="entry name" value="ZINC FINGER AND SCAN DOMAIN-CONTAINING"/>
    <property type="match status" value="1"/>
</dbReference>
<dbReference type="PANTHER" id="PTHR23226:SF432">
    <property type="entry name" value="ZINC FINGER PROTEIN 418"/>
    <property type="match status" value="1"/>
</dbReference>
<dbReference type="Pfam" id="PF01352">
    <property type="entry name" value="KRAB"/>
    <property type="match status" value="1"/>
</dbReference>
<dbReference type="Pfam" id="PF00096">
    <property type="entry name" value="zf-C2H2"/>
    <property type="match status" value="10"/>
</dbReference>
<dbReference type="SMART" id="SM00349">
    <property type="entry name" value="KRAB"/>
    <property type="match status" value="1"/>
</dbReference>
<dbReference type="SMART" id="SM00355">
    <property type="entry name" value="ZnF_C2H2"/>
    <property type="match status" value="10"/>
</dbReference>
<dbReference type="SUPFAM" id="SSF57667">
    <property type="entry name" value="beta-beta-alpha zinc fingers"/>
    <property type="match status" value="6"/>
</dbReference>
<dbReference type="SUPFAM" id="SSF109640">
    <property type="entry name" value="KRAB domain (Kruppel-associated box)"/>
    <property type="match status" value="1"/>
</dbReference>
<dbReference type="PROSITE" id="PS50805">
    <property type="entry name" value="KRAB"/>
    <property type="match status" value="1"/>
</dbReference>
<dbReference type="PROSITE" id="PS00028">
    <property type="entry name" value="ZINC_FINGER_C2H2_1"/>
    <property type="match status" value="10"/>
</dbReference>
<dbReference type="PROSITE" id="PS50157">
    <property type="entry name" value="ZINC_FINGER_C2H2_2"/>
    <property type="match status" value="10"/>
</dbReference>
<keyword id="KW-0238">DNA-binding</keyword>
<keyword id="KW-0479">Metal-binding</keyword>
<keyword id="KW-0539">Nucleus</keyword>
<keyword id="KW-1267">Proteomics identification</keyword>
<keyword id="KW-1185">Reference proteome</keyword>
<keyword id="KW-0677">Repeat</keyword>
<keyword id="KW-0804">Transcription</keyword>
<keyword id="KW-0805">Transcription regulation</keyword>
<keyword id="KW-0862">Zinc</keyword>
<keyword id="KW-0863">Zinc-finger</keyword>
<evidence type="ECO:0000255" key="1">
    <source>
        <dbReference type="PROSITE-ProRule" id="PRU00042"/>
    </source>
</evidence>
<evidence type="ECO:0000255" key="2">
    <source>
        <dbReference type="PROSITE-ProRule" id="PRU00119"/>
    </source>
</evidence>
<evidence type="ECO:0000256" key="3">
    <source>
        <dbReference type="SAM" id="MobiDB-lite"/>
    </source>
</evidence>
<evidence type="ECO:0000269" key="4">
    <source>
    </source>
</evidence>
<evidence type="ECO:0000269" key="5">
    <source ref="2"/>
</evidence>
<evidence type="ECO:0000305" key="6"/>
<protein>
    <recommendedName>
        <fullName>Zinc finger protein 154</fullName>
    </recommendedName>
</protein>
<gene>
    <name type="primary">ZNF154</name>
    <name type="synonym">KIAA2003</name>
</gene>
<comment type="function">
    <text>May be involved in transcriptional regulation.</text>
</comment>
<comment type="subcellular location">
    <subcellularLocation>
        <location evidence="6">Nucleus</location>
    </subcellularLocation>
</comment>
<comment type="similarity">
    <text evidence="6">Belongs to the krueppel C2H2-type zinc-finger protein family.</text>
</comment>
<comment type="sequence caution" evidence="6">
    <conflict type="erroneous initiation">
        <sequence resource="EMBL-CDS" id="BAC23100"/>
    </conflict>
</comment>
<accession>Q13106</accession>
<accession>A7MCY3</accession>
<accession>Q8IVG7</accession>
<accession>Q8NAR0</accession>